<proteinExistence type="inferred from homology"/>
<sequence>MFLIVGLGNPGNEYENTRHNIGFKVIDNIAKEYNIEINRQKFKGMYGEGFINGKKVMLLKPTTYMNLSGESVREVVDFYNLNNDEILVIYDDISLEVGKLRIREKGSAGGHNGIKSIIAHLNSEIFSRIKVGVGQPNGDLVKHVLGKFTKEETAILSESIEASTKAAAEIIKNDVKTAMNQFNGFKASTTV</sequence>
<comment type="function">
    <text evidence="1">Hydrolyzes ribosome-free peptidyl-tRNAs (with 1 or more amino acids incorporated), which drop off the ribosome during protein synthesis, or as a result of ribosome stalling.</text>
</comment>
<comment type="function">
    <text evidence="1">Catalyzes the release of premature peptidyl moieties from peptidyl-tRNA molecules trapped in stalled 50S ribosomal subunits, and thus maintains levels of free tRNAs and 50S ribosomes.</text>
</comment>
<comment type="catalytic activity">
    <reaction evidence="1">
        <text>an N-acyl-L-alpha-aminoacyl-tRNA + H2O = an N-acyl-L-amino acid + a tRNA + H(+)</text>
        <dbReference type="Rhea" id="RHEA:54448"/>
        <dbReference type="Rhea" id="RHEA-COMP:10123"/>
        <dbReference type="Rhea" id="RHEA-COMP:13883"/>
        <dbReference type="ChEBI" id="CHEBI:15377"/>
        <dbReference type="ChEBI" id="CHEBI:15378"/>
        <dbReference type="ChEBI" id="CHEBI:59874"/>
        <dbReference type="ChEBI" id="CHEBI:78442"/>
        <dbReference type="ChEBI" id="CHEBI:138191"/>
        <dbReference type="EC" id="3.1.1.29"/>
    </reaction>
</comment>
<comment type="subunit">
    <text evidence="1">Monomer.</text>
</comment>
<comment type="subcellular location">
    <subcellularLocation>
        <location evidence="1">Cytoplasm</location>
    </subcellularLocation>
</comment>
<comment type="similarity">
    <text evidence="1">Belongs to the PTH family.</text>
</comment>
<organism>
    <name type="scientific">Clostridium beijerinckii (strain ATCC 51743 / NCIMB 8052)</name>
    <name type="common">Clostridium acetobutylicum</name>
    <dbReference type="NCBI Taxonomy" id="290402"/>
    <lineage>
        <taxon>Bacteria</taxon>
        <taxon>Bacillati</taxon>
        <taxon>Bacillota</taxon>
        <taxon>Clostridia</taxon>
        <taxon>Eubacteriales</taxon>
        <taxon>Clostridiaceae</taxon>
        <taxon>Clostridium</taxon>
    </lineage>
</organism>
<dbReference type="EC" id="3.1.1.29" evidence="1"/>
<dbReference type="EMBL" id="CP000721">
    <property type="protein sequence ID" value="ABR32275.1"/>
    <property type="molecule type" value="Genomic_DNA"/>
</dbReference>
<dbReference type="RefSeq" id="WP_011967450.1">
    <property type="nucleotide sequence ID" value="NC_009617.1"/>
</dbReference>
<dbReference type="SMR" id="A6LPJ5"/>
<dbReference type="GeneID" id="66342954"/>
<dbReference type="KEGG" id="cbe:Cbei_0085"/>
<dbReference type="eggNOG" id="COG0193">
    <property type="taxonomic scope" value="Bacteria"/>
</dbReference>
<dbReference type="HOGENOM" id="CLU_062456_4_1_9"/>
<dbReference type="Proteomes" id="UP000000565">
    <property type="component" value="Chromosome"/>
</dbReference>
<dbReference type="GO" id="GO:0005737">
    <property type="term" value="C:cytoplasm"/>
    <property type="evidence" value="ECO:0007669"/>
    <property type="project" value="UniProtKB-SubCell"/>
</dbReference>
<dbReference type="GO" id="GO:0004045">
    <property type="term" value="F:peptidyl-tRNA hydrolase activity"/>
    <property type="evidence" value="ECO:0007669"/>
    <property type="project" value="UniProtKB-UniRule"/>
</dbReference>
<dbReference type="GO" id="GO:0000049">
    <property type="term" value="F:tRNA binding"/>
    <property type="evidence" value="ECO:0007669"/>
    <property type="project" value="UniProtKB-UniRule"/>
</dbReference>
<dbReference type="GO" id="GO:0006515">
    <property type="term" value="P:protein quality control for misfolded or incompletely synthesized proteins"/>
    <property type="evidence" value="ECO:0007669"/>
    <property type="project" value="UniProtKB-UniRule"/>
</dbReference>
<dbReference type="GO" id="GO:0072344">
    <property type="term" value="P:rescue of stalled ribosome"/>
    <property type="evidence" value="ECO:0007669"/>
    <property type="project" value="UniProtKB-UniRule"/>
</dbReference>
<dbReference type="CDD" id="cd00462">
    <property type="entry name" value="PTH"/>
    <property type="match status" value="1"/>
</dbReference>
<dbReference type="FunFam" id="3.40.50.1470:FF:000001">
    <property type="entry name" value="Peptidyl-tRNA hydrolase"/>
    <property type="match status" value="1"/>
</dbReference>
<dbReference type="Gene3D" id="3.40.50.1470">
    <property type="entry name" value="Peptidyl-tRNA hydrolase"/>
    <property type="match status" value="1"/>
</dbReference>
<dbReference type="HAMAP" id="MF_00083">
    <property type="entry name" value="Pept_tRNA_hydro_bact"/>
    <property type="match status" value="1"/>
</dbReference>
<dbReference type="InterPro" id="IPR001328">
    <property type="entry name" value="Pept_tRNA_hydro"/>
</dbReference>
<dbReference type="InterPro" id="IPR018171">
    <property type="entry name" value="Pept_tRNA_hydro_CS"/>
</dbReference>
<dbReference type="InterPro" id="IPR036416">
    <property type="entry name" value="Pept_tRNA_hydro_sf"/>
</dbReference>
<dbReference type="NCBIfam" id="TIGR00447">
    <property type="entry name" value="pth"/>
    <property type="match status" value="1"/>
</dbReference>
<dbReference type="PANTHER" id="PTHR17224">
    <property type="entry name" value="PEPTIDYL-TRNA HYDROLASE"/>
    <property type="match status" value="1"/>
</dbReference>
<dbReference type="PANTHER" id="PTHR17224:SF1">
    <property type="entry name" value="PEPTIDYL-TRNA HYDROLASE"/>
    <property type="match status" value="1"/>
</dbReference>
<dbReference type="Pfam" id="PF01195">
    <property type="entry name" value="Pept_tRNA_hydro"/>
    <property type="match status" value="1"/>
</dbReference>
<dbReference type="SUPFAM" id="SSF53178">
    <property type="entry name" value="Peptidyl-tRNA hydrolase-like"/>
    <property type="match status" value="1"/>
</dbReference>
<dbReference type="PROSITE" id="PS01195">
    <property type="entry name" value="PEPT_TRNA_HYDROL_1"/>
    <property type="match status" value="1"/>
</dbReference>
<dbReference type="PROSITE" id="PS01196">
    <property type="entry name" value="PEPT_TRNA_HYDROL_2"/>
    <property type="match status" value="1"/>
</dbReference>
<protein>
    <recommendedName>
        <fullName evidence="1">Peptidyl-tRNA hydrolase</fullName>
        <shortName evidence="1">Pth</shortName>
        <ecNumber evidence="1">3.1.1.29</ecNumber>
    </recommendedName>
</protein>
<evidence type="ECO:0000255" key="1">
    <source>
        <dbReference type="HAMAP-Rule" id="MF_00083"/>
    </source>
</evidence>
<feature type="chain" id="PRO_1000075333" description="Peptidyl-tRNA hydrolase">
    <location>
        <begin position="1"/>
        <end position="191"/>
    </location>
</feature>
<feature type="active site" description="Proton acceptor" evidence="1">
    <location>
        <position position="19"/>
    </location>
</feature>
<feature type="binding site" evidence="1">
    <location>
        <position position="14"/>
    </location>
    <ligand>
        <name>tRNA</name>
        <dbReference type="ChEBI" id="CHEBI:17843"/>
    </ligand>
</feature>
<feature type="binding site" evidence="1">
    <location>
        <position position="64"/>
    </location>
    <ligand>
        <name>tRNA</name>
        <dbReference type="ChEBI" id="CHEBI:17843"/>
    </ligand>
</feature>
<feature type="binding site" evidence="1">
    <location>
        <position position="66"/>
    </location>
    <ligand>
        <name>tRNA</name>
        <dbReference type="ChEBI" id="CHEBI:17843"/>
    </ligand>
</feature>
<feature type="binding site" evidence="1">
    <location>
        <position position="112"/>
    </location>
    <ligand>
        <name>tRNA</name>
        <dbReference type="ChEBI" id="CHEBI:17843"/>
    </ligand>
</feature>
<feature type="site" description="Discriminates between blocked and unblocked aminoacyl-tRNA" evidence="1">
    <location>
        <position position="9"/>
    </location>
</feature>
<feature type="site" description="Stabilizes the basic form of H active site to accept a proton" evidence="1">
    <location>
        <position position="91"/>
    </location>
</feature>
<keyword id="KW-0963">Cytoplasm</keyword>
<keyword id="KW-0378">Hydrolase</keyword>
<keyword id="KW-0694">RNA-binding</keyword>
<keyword id="KW-0820">tRNA-binding</keyword>
<accession>A6LPJ5</accession>
<reference key="1">
    <citation type="submission" date="2007-06" db="EMBL/GenBank/DDBJ databases">
        <title>Complete sequence of Clostridium beijerinckii NCIMB 8052.</title>
        <authorList>
            <consortium name="US DOE Joint Genome Institute"/>
            <person name="Copeland A."/>
            <person name="Lucas S."/>
            <person name="Lapidus A."/>
            <person name="Barry K."/>
            <person name="Detter J.C."/>
            <person name="Glavina del Rio T."/>
            <person name="Hammon N."/>
            <person name="Israni S."/>
            <person name="Dalin E."/>
            <person name="Tice H."/>
            <person name="Pitluck S."/>
            <person name="Sims D."/>
            <person name="Brettin T."/>
            <person name="Bruce D."/>
            <person name="Tapia R."/>
            <person name="Brainard J."/>
            <person name="Schmutz J."/>
            <person name="Larimer F."/>
            <person name="Land M."/>
            <person name="Hauser L."/>
            <person name="Kyrpides N."/>
            <person name="Mikhailova N."/>
            <person name="Bennet G."/>
            <person name="Cann I."/>
            <person name="Chen J.-S."/>
            <person name="Contreras A.L."/>
            <person name="Jones D."/>
            <person name="Kashket E."/>
            <person name="Mitchell W."/>
            <person name="Stoddard S."/>
            <person name="Schwarz W."/>
            <person name="Qureshi N."/>
            <person name="Young M."/>
            <person name="Shi Z."/>
            <person name="Ezeji T."/>
            <person name="White B."/>
            <person name="Blaschek H."/>
            <person name="Richardson P."/>
        </authorList>
    </citation>
    <scope>NUCLEOTIDE SEQUENCE [LARGE SCALE GENOMIC DNA]</scope>
    <source>
        <strain>ATCC 51743 / NCIMB 8052</strain>
    </source>
</reference>
<name>PTH_CLOB8</name>
<gene>
    <name evidence="1" type="primary">pth</name>
    <name type="ordered locus">Cbei_0085</name>
</gene>